<evidence type="ECO:0000255" key="1">
    <source>
        <dbReference type="HAMAP-Rule" id="MF_01864"/>
    </source>
</evidence>
<evidence type="ECO:0000255" key="2">
    <source>
        <dbReference type="PROSITE-ProRule" id="PRU01266"/>
    </source>
</evidence>
<accession>A6VZE1</accession>
<dbReference type="EC" id="2.8.4.3" evidence="1"/>
<dbReference type="EMBL" id="CP000749">
    <property type="protein sequence ID" value="ABR71820.1"/>
    <property type="molecule type" value="Genomic_DNA"/>
</dbReference>
<dbReference type="SMR" id="A6VZE1"/>
<dbReference type="STRING" id="400668.Mmwyl1_2909"/>
<dbReference type="KEGG" id="mmw:Mmwyl1_2909"/>
<dbReference type="eggNOG" id="COG0621">
    <property type="taxonomic scope" value="Bacteria"/>
</dbReference>
<dbReference type="HOGENOM" id="CLU_018697_2_0_6"/>
<dbReference type="OrthoDB" id="9805215at2"/>
<dbReference type="GO" id="GO:0005829">
    <property type="term" value="C:cytosol"/>
    <property type="evidence" value="ECO:0007669"/>
    <property type="project" value="TreeGrafter"/>
</dbReference>
<dbReference type="GO" id="GO:0051539">
    <property type="term" value="F:4 iron, 4 sulfur cluster binding"/>
    <property type="evidence" value="ECO:0007669"/>
    <property type="project" value="UniProtKB-UniRule"/>
</dbReference>
<dbReference type="GO" id="GO:0046872">
    <property type="term" value="F:metal ion binding"/>
    <property type="evidence" value="ECO:0007669"/>
    <property type="project" value="UniProtKB-KW"/>
</dbReference>
<dbReference type="GO" id="GO:0035597">
    <property type="term" value="F:N6-isopentenyladenosine methylthiotransferase activity"/>
    <property type="evidence" value="ECO:0007669"/>
    <property type="project" value="TreeGrafter"/>
</dbReference>
<dbReference type="CDD" id="cd01335">
    <property type="entry name" value="Radical_SAM"/>
    <property type="match status" value="1"/>
</dbReference>
<dbReference type="FunFam" id="3.40.50.12160:FF:000001">
    <property type="entry name" value="tRNA-2-methylthio-N(6)-dimethylallyladenosine synthase"/>
    <property type="match status" value="1"/>
</dbReference>
<dbReference type="FunFam" id="3.80.30.20:FF:000001">
    <property type="entry name" value="tRNA-2-methylthio-N(6)-dimethylallyladenosine synthase 2"/>
    <property type="match status" value="1"/>
</dbReference>
<dbReference type="Gene3D" id="3.40.50.12160">
    <property type="entry name" value="Methylthiotransferase, N-terminal domain"/>
    <property type="match status" value="1"/>
</dbReference>
<dbReference type="Gene3D" id="3.80.30.20">
    <property type="entry name" value="tm_1862 like domain"/>
    <property type="match status" value="1"/>
</dbReference>
<dbReference type="HAMAP" id="MF_01864">
    <property type="entry name" value="tRNA_metthiotr_MiaB"/>
    <property type="match status" value="1"/>
</dbReference>
<dbReference type="InterPro" id="IPR006638">
    <property type="entry name" value="Elp3/MiaA/NifB-like_rSAM"/>
</dbReference>
<dbReference type="InterPro" id="IPR005839">
    <property type="entry name" value="Methylthiotransferase"/>
</dbReference>
<dbReference type="InterPro" id="IPR020612">
    <property type="entry name" value="Methylthiotransferase_CS"/>
</dbReference>
<dbReference type="InterPro" id="IPR013848">
    <property type="entry name" value="Methylthiotransferase_N"/>
</dbReference>
<dbReference type="InterPro" id="IPR038135">
    <property type="entry name" value="Methylthiotransferase_N_sf"/>
</dbReference>
<dbReference type="InterPro" id="IPR006463">
    <property type="entry name" value="MiaB_methiolase"/>
</dbReference>
<dbReference type="InterPro" id="IPR007197">
    <property type="entry name" value="rSAM"/>
</dbReference>
<dbReference type="InterPro" id="IPR023404">
    <property type="entry name" value="rSAM_horseshoe"/>
</dbReference>
<dbReference type="InterPro" id="IPR002792">
    <property type="entry name" value="TRAM_dom"/>
</dbReference>
<dbReference type="NCBIfam" id="TIGR01574">
    <property type="entry name" value="miaB-methiolase"/>
    <property type="match status" value="1"/>
</dbReference>
<dbReference type="NCBIfam" id="TIGR00089">
    <property type="entry name" value="MiaB/RimO family radical SAM methylthiotransferase"/>
    <property type="match status" value="1"/>
</dbReference>
<dbReference type="PANTHER" id="PTHR43020">
    <property type="entry name" value="CDK5 REGULATORY SUBUNIT-ASSOCIATED PROTEIN 1"/>
    <property type="match status" value="1"/>
</dbReference>
<dbReference type="PANTHER" id="PTHR43020:SF2">
    <property type="entry name" value="MITOCHONDRIAL TRNA METHYLTHIOTRANSFERASE CDK5RAP1"/>
    <property type="match status" value="1"/>
</dbReference>
<dbReference type="Pfam" id="PF04055">
    <property type="entry name" value="Radical_SAM"/>
    <property type="match status" value="1"/>
</dbReference>
<dbReference type="Pfam" id="PF01938">
    <property type="entry name" value="TRAM"/>
    <property type="match status" value="1"/>
</dbReference>
<dbReference type="Pfam" id="PF00919">
    <property type="entry name" value="UPF0004"/>
    <property type="match status" value="1"/>
</dbReference>
<dbReference type="SFLD" id="SFLDF00273">
    <property type="entry name" value="(dimethylallyl)adenosine_tRNA"/>
    <property type="match status" value="1"/>
</dbReference>
<dbReference type="SFLD" id="SFLDG01082">
    <property type="entry name" value="B12-binding_domain_containing"/>
    <property type="match status" value="1"/>
</dbReference>
<dbReference type="SFLD" id="SFLDS00029">
    <property type="entry name" value="Radical_SAM"/>
    <property type="match status" value="1"/>
</dbReference>
<dbReference type="SMART" id="SM00729">
    <property type="entry name" value="Elp3"/>
    <property type="match status" value="1"/>
</dbReference>
<dbReference type="SUPFAM" id="SSF102114">
    <property type="entry name" value="Radical SAM enzymes"/>
    <property type="match status" value="1"/>
</dbReference>
<dbReference type="PROSITE" id="PS51449">
    <property type="entry name" value="MTTASE_N"/>
    <property type="match status" value="1"/>
</dbReference>
<dbReference type="PROSITE" id="PS01278">
    <property type="entry name" value="MTTASE_RADICAL"/>
    <property type="match status" value="1"/>
</dbReference>
<dbReference type="PROSITE" id="PS51918">
    <property type="entry name" value="RADICAL_SAM"/>
    <property type="match status" value="1"/>
</dbReference>
<dbReference type="PROSITE" id="PS50926">
    <property type="entry name" value="TRAM"/>
    <property type="match status" value="1"/>
</dbReference>
<sequence>MAKKLFIQTHGCQMNEYDSSRMADLLGESHEMELTDNAEEADVLLLNTCSIREKAQDKVYHQLGRWKKLKQKNPNLVIGVGGCVASQEGDAIRKRAKHVDMIFGPQTLHKLPEMVNAAGKHIPITDVTFPEIEKFDHLPAPRVEGAEAFVSIMEGCSKYCTFCVVPYTRGEEVSRPFDSILKEVVQLAEQGVREIHLLGQNVNAYRGDTAEGDEADLADIIHAVAQIDGVERIRFTTSHPVEFSDSLIEAFRNEPKLVSHLHLPVQSGADNILSAMKRGHDRQYYIDKINRIKEARPGISLSSDFIIGFPGETDDDFVDTMNLIQEIGFDHSFSFVYSQRPGTPASNLEDDTPEDVKKERLAILQRRISQQAYDISLSMVGEVQRILISGYSPRDPGQLQGRTENNRIVNFRAFDPQLIGKFADVVITDAYPNSLLGELVGSELDSDFVLQ</sequence>
<feature type="chain" id="PRO_0000374371" description="tRNA-2-methylthio-N(6)-dimethylallyladenosine synthase">
    <location>
        <begin position="1"/>
        <end position="451"/>
    </location>
</feature>
<feature type="domain" description="MTTase N-terminal" evidence="1">
    <location>
        <begin position="3"/>
        <end position="120"/>
    </location>
</feature>
<feature type="domain" description="Radical SAM core" evidence="2">
    <location>
        <begin position="142"/>
        <end position="374"/>
    </location>
</feature>
<feature type="domain" description="TRAM" evidence="1">
    <location>
        <begin position="377"/>
        <end position="441"/>
    </location>
</feature>
<feature type="binding site" evidence="1">
    <location>
        <position position="12"/>
    </location>
    <ligand>
        <name>[4Fe-4S] cluster</name>
        <dbReference type="ChEBI" id="CHEBI:49883"/>
        <label>1</label>
    </ligand>
</feature>
<feature type="binding site" evidence="1">
    <location>
        <position position="49"/>
    </location>
    <ligand>
        <name>[4Fe-4S] cluster</name>
        <dbReference type="ChEBI" id="CHEBI:49883"/>
        <label>1</label>
    </ligand>
</feature>
<feature type="binding site" evidence="1">
    <location>
        <position position="83"/>
    </location>
    <ligand>
        <name>[4Fe-4S] cluster</name>
        <dbReference type="ChEBI" id="CHEBI:49883"/>
        <label>1</label>
    </ligand>
</feature>
<feature type="binding site" evidence="1">
    <location>
        <position position="156"/>
    </location>
    <ligand>
        <name>[4Fe-4S] cluster</name>
        <dbReference type="ChEBI" id="CHEBI:49883"/>
        <label>2</label>
        <note>4Fe-4S-S-AdoMet</note>
    </ligand>
</feature>
<feature type="binding site" evidence="1">
    <location>
        <position position="160"/>
    </location>
    <ligand>
        <name>[4Fe-4S] cluster</name>
        <dbReference type="ChEBI" id="CHEBI:49883"/>
        <label>2</label>
        <note>4Fe-4S-S-AdoMet</note>
    </ligand>
</feature>
<feature type="binding site" evidence="1">
    <location>
        <position position="163"/>
    </location>
    <ligand>
        <name>[4Fe-4S] cluster</name>
        <dbReference type="ChEBI" id="CHEBI:49883"/>
        <label>2</label>
        <note>4Fe-4S-S-AdoMet</note>
    </ligand>
</feature>
<organism>
    <name type="scientific">Marinomonas sp. (strain MWYL1)</name>
    <dbReference type="NCBI Taxonomy" id="400668"/>
    <lineage>
        <taxon>Bacteria</taxon>
        <taxon>Pseudomonadati</taxon>
        <taxon>Pseudomonadota</taxon>
        <taxon>Gammaproteobacteria</taxon>
        <taxon>Oceanospirillales</taxon>
        <taxon>Oceanospirillaceae</taxon>
        <taxon>Marinomonas</taxon>
    </lineage>
</organism>
<keyword id="KW-0004">4Fe-4S</keyword>
<keyword id="KW-0963">Cytoplasm</keyword>
<keyword id="KW-0408">Iron</keyword>
<keyword id="KW-0411">Iron-sulfur</keyword>
<keyword id="KW-0479">Metal-binding</keyword>
<keyword id="KW-0949">S-adenosyl-L-methionine</keyword>
<keyword id="KW-0808">Transferase</keyword>
<keyword id="KW-0819">tRNA processing</keyword>
<gene>
    <name evidence="1" type="primary">miaB</name>
    <name type="ordered locus">Mmwyl1_2909</name>
</gene>
<comment type="function">
    <text evidence="1">Catalyzes the methylthiolation of N6-(dimethylallyl)adenosine (i(6)A), leading to the formation of 2-methylthio-N6-(dimethylallyl)adenosine (ms(2)i(6)A) at position 37 in tRNAs that read codons beginning with uridine.</text>
</comment>
<comment type="catalytic activity">
    <reaction evidence="1">
        <text>N(6)-dimethylallyladenosine(37) in tRNA + (sulfur carrier)-SH + AH2 + 2 S-adenosyl-L-methionine = 2-methylsulfanyl-N(6)-dimethylallyladenosine(37) in tRNA + (sulfur carrier)-H + 5'-deoxyadenosine + L-methionine + A + S-adenosyl-L-homocysteine + 2 H(+)</text>
        <dbReference type="Rhea" id="RHEA:37067"/>
        <dbReference type="Rhea" id="RHEA-COMP:10375"/>
        <dbReference type="Rhea" id="RHEA-COMP:10376"/>
        <dbReference type="Rhea" id="RHEA-COMP:14737"/>
        <dbReference type="Rhea" id="RHEA-COMP:14739"/>
        <dbReference type="ChEBI" id="CHEBI:13193"/>
        <dbReference type="ChEBI" id="CHEBI:15378"/>
        <dbReference type="ChEBI" id="CHEBI:17319"/>
        <dbReference type="ChEBI" id="CHEBI:17499"/>
        <dbReference type="ChEBI" id="CHEBI:29917"/>
        <dbReference type="ChEBI" id="CHEBI:57844"/>
        <dbReference type="ChEBI" id="CHEBI:57856"/>
        <dbReference type="ChEBI" id="CHEBI:59789"/>
        <dbReference type="ChEBI" id="CHEBI:64428"/>
        <dbReference type="ChEBI" id="CHEBI:74415"/>
        <dbReference type="ChEBI" id="CHEBI:74417"/>
        <dbReference type="EC" id="2.8.4.3"/>
    </reaction>
</comment>
<comment type="cofactor">
    <cofactor evidence="1">
        <name>[4Fe-4S] cluster</name>
        <dbReference type="ChEBI" id="CHEBI:49883"/>
    </cofactor>
    <text evidence="1">Binds 2 [4Fe-4S] clusters. One cluster is coordinated with 3 cysteines and an exchangeable S-adenosyl-L-methionine.</text>
</comment>
<comment type="subunit">
    <text evidence="1">Monomer.</text>
</comment>
<comment type="subcellular location">
    <subcellularLocation>
        <location evidence="1">Cytoplasm</location>
    </subcellularLocation>
</comment>
<comment type="similarity">
    <text evidence="1">Belongs to the methylthiotransferase family. MiaB subfamily.</text>
</comment>
<reference key="1">
    <citation type="submission" date="2007-06" db="EMBL/GenBank/DDBJ databases">
        <title>Complete sequence of Marinomonas sp. MWYL1.</title>
        <authorList>
            <consortium name="US DOE Joint Genome Institute"/>
            <person name="Copeland A."/>
            <person name="Lucas S."/>
            <person name="Lapidus A."/>
            <person name="Barry K."/>
            <person name="Glavina del Rio T."/>
            <person name="Dalin E."/>
            <person name="Tice H."/>
            <person name="Pitluck S."/>
            <person name="Kiss H."/>
            <person name="Brettin T."/>
            <person name="Bruce D."/>
            <person name="Detter J.C."/>
            <person name="Han C."/>
            <person name="Schmutz J."/>
            <person name="Larimer F."/>
            <person name="Land M."/>
            <person name="Hauser L."/>
            <person name="Kyrpides N."/>
            <person name="Kim E."/>
            <person name="Johnston A.W.B."/>
            <person name="Todd J.D."/>
            <person name="Rogers R."/>
            <person name="Wexler M."/>
            <person name="Bond P.L."/>
            <person name="Li Y."/>
            <person name="Richardson P."/>
        </authorList>
    </citation>
    <scope>NUCLEOTIDE SEQUENCE [LARGE SCALE GENOMIC DNA]</scope>
    <source>
        <strain>MWYL1</strain>
    </source>
</reference>
<protein>
    <recommendedName>
        <fullName evidence="1">tRNA-2-methylthio-N(6)-dimethylallyladenosine synthase</fullName>
        <ecNumber evidence="1">2.8.4.3</ecNumber>
    </recommendedName>
    <alternativeName>
        <fullName evidence="1">(Dimethylallyl)adenosine tRNA methylthiotransferase MiaB</fullName>
    </alternativeName>
    <alternativeName>
        <fullName evidence="1">tRNA-i(6)A37 methylthiotransferase</fullName>
    </alternativeName>
</protein>
<name>MIAB_MARMS</name>
<proteinExistence type="inferred from homology"/>